<feature type="chain" id="PRO_0000054734" description="Nodulation protein G">
    <location>
        <begin position="1"/>
        <end position="244"/>
    </location>
</feature>
<feature type="active site" description="Proton acceptor" evidence="2">
    <location>
        <position position="152"/>
    </location>
</feature>
<feature type="binding site" evidence="1">
    <location>
        <begin position="11"/>
        <end position="35"/>
    </location>
    <ligand>
        <name>NAD(+)</name>
        <dbReference type="ChEBI" id="CHEBI:57540"/>
    </ligand>
</feature>
<feature type="binding site" evidence="1">
    <location>
        <position position="139"/>
    </location>
    <ligand>
        <name>substrate</name>
    </ligand>
</feature>
<accession>P06235</accession>
<name>NODG_RHIML</name>
<geneLocation type="plasmid">
    <name>sym pRme41b</name>
</geneLocation>
<organism>
    <name type="scientific">Rhizobium meliloti</name>
    <name type="common">Ensifer meliloti</name>
    <name type="synonym">Sinorhizobium meliloti</name>
    <dbReference type="NCBI Taxonomy" id="382"/>
    <lineage>
        <taxon>Bacteria</taxon>
        <taxon>Pseudomonadati</taxon>
        <taxon>Pseudomonadota</taxon>
        <taxon>Alphaproteobacteria</taxon>
        <taxon>Hyphomicrobiales</taxon>
        <taxon>Rhizobiaceae</taxon>
        <taxon>Sinorhizobium/Ensifer group</taxon>
        <taxon>Sinorhizobium</taxon>
    </lineage>
</organism>
<keyword id="KW-0520">NAD</keyword>
<keyword id="KW-0536">Nodulation</keyword>
<keyword id="KW-0560">Oxidoreductase</keyword>
<keyword id="KW-0614">Plasmid</keyword>
<protein>
    <recommendedName>
        <fullName>Nodulation protein G</fullName>
    </recommendedName>
    <alternativeName>
        <fullName>Host-specificity of nodulation protein C</fullName>
    </alternativeName>
</protein>
<proteinExistence type="inferred from homology"/>
<gene>
    <name type="primary">nodG</name>
    <name type="synonym">hsnC</name>
</gene>
<evidence type="ECO:0000250" key="1"/>
<evidence type="ECO:0000255" key="2">
    <source>
        <dbReference type="PROSITE-ProRule" id="PRU10001"/>
    </source>
</evidence>
<evidence type="ECO:0000305" key="3"/>
<reference key="1">
    <citation type="journal article" date="1986" name="Cell">
        <title>Organization, structure and symbiotic function of Rhizobium meliloti nodulation genes determining host specificity for alfalfa.</title>
        <authorList>
            <person name="Horvath B."/>
            <person name="Kondorosi E."/>
            <person name="John M."/>
            <person name="Schmidt J."/>
            <person name="Toeroek I."/>
            <person name="Gyoergypal Z."/>
            <person name="Barabas I."/>
            <person name="Wieneke U."/>
            <person name="Schell J."/>
            <person name="Kondorosi A."/>
        </authorList>
    </citation>
    <scope>NUCLEOTIDE SEQUENCE [GENOMIC DNA]</scope>
</reference>
<comment type="function">
    <text>Proposed to modify Nod factor fatty acyl chain.</text>
</comment>
<comment type="similarity">
    <text evidence="3">Belongs to the short-chain dehydrogenases/reductases (SDR) family.</text>
</comment>
<dbReference type="EMBL" id="M14052">
    <property type="protein sequence ID" value="AAA26288.1"/>
    <property type="molecule type" value="Genomic_DNA"/>
</dbReference>
<dbReference type="SMR" id="P06235"/>
<dbReference type="GO" id="GO:0016491">
    <property type="term" value="F:oxidoreductase activity"/>
    <property type="evidence" value="ECO:0007669"/>
    <property type="project" value="UniProtKB-KW"/>
</dbReference>
<dbReference type="GO" id="GO:0006629">
    <property type="term" value="P:lipid metabolic process"/>
    <property type="evidence" value="ECO:0007669"/>
    <property type="project" value="UniProtKB-ARBA"/>
</dbReference>
<dbReference type="GO" id="GO:0032787">
    <property type="term" value="P:monocarboxylic acid metabolic process"/>
    <property type="evidence" value="ECO:0007669"/>
    <property type="project" value="UniProtKB-ARBA"/>
</dbReference>
<dbReference type="FunFam" id="3.40.50.720:FF:000173">
    <property type="entry name" value="3-oxoacyl-[acyl-carrier protein] reductase"/>
    <property type="match status" value="1"/>
</dbReference>
<dbReference type="Gene3D" id="3.40.50.720">
    <property type="entry name" value="NAD(P)-binding Rossmann-like Domain"/>
    <property type="match status" value="1"/>
</dbReference>
<dbReference type="InterPro" id="IPR036291">
    <property type="entry name" value="NAD(P)-bd_dom_sf"/>
</dbReference>
<dbReference type="InterPro" id="IPR020904">
    <property type="entry name" value="Sc_DH/Rdtase_CS"/>
</dbReference>
<dbReference type="InterPro" id="IPR050259">
    <property type="entry name" value="SDR"/>
</dbReference>
<dbReference type="InterPro" id="IPR002347">
    <property type="entry name" value="SDR_fam"/>
</dbReference>
<dbReference type="PANTHER" id="PTHR42879">
    <property type="entry name" value="3-OXOACYL-(ACYL-CARRIER-PROTEIN) REDUCTASE"/>
    <property type="match status" value="1"/>
</dbReference>
<dbReference type="PANTHER" id="PTHR42879:SF2">
    <property type="entry name" value="3-OXOACYL-[ACYL-CARRIER-PROTEIN] REDUCTASE FABG"/>
    <property type="match status" value="1"/>
</dbReference>
<dbReference type="Pfam" id="PF13561">
    <property type="entry name" value="adh_short_C2"/>
    <property type="match status" value="1"/>
</dbReference>
<dbReference type="PRINTS" id="PR00081">
    <property type="entry name" value="GDHRDH"/>
</dbReference>
<dbReference type="PRINTS" id="PR00080">
    <property type="entry name" value="SDRFAMILY"/>
</dbReference>
<dbReference type="SMART" id="SM00822">
    <property type="entry name" value="PKS_KR"/>
    <property type="match status" value="1"/>
</dbReference>
<dbReference type="SUPFAM" id="SSF51735">
    <property type="entry name" value="NAD(P)-binding Rossmann-fold domains"/>
    <property type="match status" value="1"/>
</dbReference>
<dbReference type="PROSITE" id="PS00061">
    <property type="entry name" value="ADH_SHORT"/>
    <property type="match status" value="1"/>
</dbReference>
<sequence length="244" mass="26697">MFELTGRKALVTGASGAIGGAIARVLHAQGAIVGLHGTQMKNWRHWQLSLETGSSCSRLIWPIETKSRRLVRERKPILKASTSWSTNAGITKDGLFLHMADPDWDIVLEVNLTAMFRLTREITQQMIRRRNGRIINVTSVAGAIGNPGQTNYCASKAGMIGFSKSWRRRSTRNITVNCVAPGFIESAMTDKLNHKQKEKIMVAIPIHRMGTGTEVASAVAYLASDHAAYVTGQTIHVNGGMAMI</sequence>